<feature type="chain" id="PRO_0000384784" description="Ribosome maturation factor RimP">
    <location>
        <begin position="1"/>
        <end position="177"/>
    </location>
</feature>
<dbReference type="EMBL" id="CP000387">
    <property type="protein sequence ID" value="ABN45277.1"/>
    <property type="molecule type" value="Genomic_DNA"/>
</dbReference>
<dbReference type="RefSeq" id="YP_001035827.1">
    <property type="nucleotide sequence ID" value="NC_009009.1"/>
</dbReference>
<dbReference type="SMR" id="A3CQ22"/>
<dbReference type="STRING" id="388919.SSA_1901"/>
<dbReference type="KEGG" id="ssa:SSA_1901"/>
<dbReference type="PATRIC" id="fig|388919.9.peg.1802"/>
<dbReference type="eggNOG" id="COG0779">
    <property type="taxonomic scope" value="Bacteria"/>
</dbReference>
<dbReference type="HOGENOM" id="CLU_070525_2_0_9"/>
<dbReference type="OrthoDB" id="9805006at2"/>
<dbReference type="Proteomes" id="UP000002148">
    <property type="component" value="Chromosome"/>
</dbReference>
<dbReference type="GO" id="GO:0005829">
    <property type="term" value="C:cytosol"/>
    <property type="evidence" value="ECO:0007669"/>
    <property type="project" value="TreeGrafter"/>
</dbReference>
<dbReference type="GO" id="GO:0000028">
    <property type="term" value="P:ribosomal small subunit assembly"/>
    <property type="evidence" value="ECO:0007669"/>
    <property type="project" value="TreeGrafter"/>
</dbReference>
<dbReference type="GO" id="GO:0006412">
    <property type="term" value="P:translation"/>
    <property type="evidence" value="ECO:0007669"/>
    <property type="project" value="TreeGrafter"/>
</dbReference>
<dbReference type="CDD" id="cd01734">
    <property type="entry name" value="YlxS_C"/>
    <property type="match status" value="1"/>
</dbReference>
<dbReference type="Gene3D" id="2.30.30.180">
    <property type="entry name" value="Ribosome maturation factor RimP, C-terminal domain"/>
    <property type="match status" value="1"/>
</dbReference>
<dbReference type="Gene3D" id="3.30.300.70">
    <property type="entry name" value="RimP-like superfamily, N-terminal"/>
    <property type="match status" value="1"/>
</dbReference>
<dbReference type="HAMAP" id="MF_01077">
    <property type="entry name" value="RimP"/>
    <property type="match status" value="1"/>
</dbReference>
<dbReference type="InterPro" id="IPR003728">
    <property type="entry name" value="Ribosome_maturation_RimP"/>
</dbReference>
<dbReference type="InterPro" id="IPR028998">
    <property type="entry name" value="RimP_C"/>
</dbReference>
<dbReference type="InterPro" id="IPR036847">
    <property type="entry name" value="RimP_C_sf"/>
</dbReference>
<dbReference type="InterPro" id="IPR028989">
    <property type="entry name" value="RimP_N"/>
</dbReference>
<dbReference type="InterPro" id="IPR035956">
    <property type="entry name" value="RimP_N_sf"/>
</dbReference>
<dbReference type="NCBIfam" id="NF000928">
    <property type="entry name" value="PRK00092.1-2"/>
    <property type="match status" value="1"/>
</dbReference>
<dbReference type="PANTHER" id="PTHR33867">
    <property type="entry name" value="RIBOSOME MATURATION FACTOR RIMP"/>
    <property type="match status" value="1"/>
</dbReference>
<dbReference type="PANTHER" id="PTHR33867:SF1">
    <property type="entry name" value="RIBOSOME MATURATION FACTOR RIMP"/>
    <property type="match status" value="1"/>
</dbReference>
<dbReference type="Pfam" id="PF17384">
    <property type="entry name" value="DUF150_C"/>
    <property type="match status" value="1"/>
</dbReference>
<dbReference type="Pfam" id="PF02576">
    <property type="entry name" value="RimP_N"/>
    <property type="match status" value="1"/>
</dbReference>
<dbReference type="SUPFAM" id="SSF74942">
    <property type="entry name" value="YhbC-like, C-terminal domain"/>
    <property type="match status" value="1"/>
</dbReference>
<dbReference type="SUPFAM" id="SSF75420">
    <property type="entry name" value="YhbC-like, N-terminal domain"/>
    <property type="match status" value="1"/>
</dbReference>
<comment type="function">
    <text evidence="1">Required for maturation of 30S ribosomal subunits.</text>
</comment>
<comment type="subcellular location">
    <subcellularLocation>
        <location evidence="1">Cytoplasm</location>
    </subcellularLocation>
</comment>
<comment type="similarity">
    <text evidence="1">Belongs to the RimP family.</text>
</comment>
<sequence>MNKEREARKYLRLLSVRRCRHIATIVELVREVIEPAILAPYELVDIEYGKMGGDYVLSVFVDKPEGITVNDTADLTDIISPLLDQIKPDPFPEQYFLEVTSPGLERPLKTKEQLADAVGSYIHVSLYKAVDKQKVFEGTLLSFEEDVLHMEYLDKTRRKEVEIPYSLVSKARLAVKF</sequence>
<name>RIMP_STRSV</name>
<accession>A3CQ22</accession>
<protein>
    <recommendedName>
        <fullName evidence="1">Ribosome maturation factor RimP</fullName>
    </recommendedName>
</protein>
<organism>
    <name type="scientific">Streptococcus sanguinis (strain SK36)</name>
    <dbReference type="NCBI Taxonomy" id="388919"/>
    <lineage>
        <taxon>Bacteria</taxon>
        <taxon>Bacillati</taxon>
        <taxon>Bacillota</taxon>
        <taxon>Bacilli</taxon>
        <taxon>Lactobacillales</taxon>
        <taxon>Streptococcaceae</taxon>
        <taxon>Streptococcus</taxon>
    </lineage>
</organism>
<evidence type="ECO:0000255" key="1">
    <source>
        <dbReference type="HAMAP-Rule" id="MF_01077"/>
    </source>
</evidence>
<gene>
    <name evidence="1" type="primary">rimP</name>
    <name type="ordered locus">SSA_1901</name>
</gene>
<keyword id="KW-0963">Cytoplasm</keyword>
<keyword id="KW-1185">Reference proteome</keyword>
<keyword id="KW-0690">Ribosome biogenesis</keyword>
<reference key="1">
    <citation type="journal article" date="2007" name="J. Bacteriol.">
        <title>Genome of the opportunistic pathogen Streptococcus sanguinis.</title>
        <authorList>
            <person name="Xu P."/>
            <person name="Alves J.M."/>
            <person name="Kitten T."/>
            <person name="Brown A."/>
            <person name="Chen Z."/>
            <person name="Ozaki L.S."/>
            <person name="Manque P."/>
            <person name="Ge X."/>
            <person name="Serrano M.G."/>
            <person name="Puiu D."/>
            <person name="Hendricks S."/>
            <person name="Wang Y."/>
            <person name="Chaplin M.D."/>
            <person name="Akan D."/>
            <person name="Paik S."/>
            <person name="Peterson D.L."/>
            <person name="Macrina F.L."/>
            <person name="Buck G.A."/>
        </authorList>
    </citation>
    <scope>NUCLEOTIDE SEQUENCE [LARGE SCALE GENOMIC DNA]</scope>
    <source>
        <strain>SK36</strain>
    </source>
</reference>
<proteinExistence type="inferred from homology"/>